<reference key="1">
    <citation type="journal article" date="2001" name="Virology">
        <title>The genome sequence of Yaba-like disease virus, a yatapoxvirus.</title>
        <authorList>
            <person name="Lee H.-J."/>
            <person name="Essani K."/>
            <person name="Smith G.L."/>
        </authorList>
    </citation>
    <scope>NUCLEOTIDE SEQUENCE [LARGE SCALE GENOMIC DNA]</scope>
</reference>
<feature type="chain" id="PRO_0000308943" description="Poly(A) polymerase catalytic subunit">
    <location>
        <begin position="1"/>
        <end position="470"/>
    </location>
</feature>
<feature type="active site" evidence="1">
    <location>
        <position position="192"/>
    </location>
</feature>
<feature type="active site" evidence="1">
    <location>
        <position position="194"/>
    </location>
</feature>
<gene>
    <name type="primary">PAPL</name>
    <name type="ordered locus">32L</name>
</gene>
<evidence type="ECO:0000250" key="1"/>
<evidence type="ECO:0000305" key="2"/>
<organismHost>
    <name type="scientific">Homo sapiens</name>
    <name type="common">Human</name>
    <dbReference type="NCBI Taxonomy" id="9606"/>
</organismHost>
<organismHost>
    <name type="scientific">Simiiformes</name>
    <dbReference type="NCBI Taxonomy" id="314293"/>
</organismHost>
<name>PAP1_YLDV</name>
<keyword id="KW-0067">ATP-binding</keyword>
<keyword id="KW-0507">mRNA processing</keyword>
<keyword id="KW-0547">Nucleotide-binding</keyword>
<keyword id="KW-0804">Transcription</keyword>
<keyword id="KW-0808">Transferase</keyword>
<dbReference type="EC" id="2.7.7.19"/>
<dbReference type="EMBL" id="AJ293568">
    <property type="protein sequence ID" value="CAC21270.1"/>
    <property type="molecule type" value="Genomic_DNA"/>
</dbReference>
<dbReference type="RefSeq" id="NP_073417.1">
    <property type="nucleotide sequence ID" value="NC_002642.1"/>
</dbReference>
<dbReference type="SMR" id="Q9DHT0"/>
<dbReference type="GeneID" id="918743"/>
<dbReference type="KEGG" id="vg:918743"/>
<dbReference type="OrthoDB" id="3428at10239"/>
<dbReference type="Proteomes" id="UP000136581">
    <property type="component" value="Genome"/>
</dbReference>
<dbReference type="GO" id="GO:0005524">
    <property type="term" value="F:ATP binding"/>
    <property type="evidence" value="ECO:0007669"/>
    <property type="project" value="UniProtKB-KW"/>
</dbReference>
<dbReference type="GO" id="GO:1990817">
    <property type="term" value="F:poly(A) RNA polymerase activity"/>
    <property type="evidence" value="ECO:0007669"/>
    <property type="project" value="UniProtKB-EC"/>
</dbReference>
<dbReference type="GO" id="GO:0006397">
    <property type="term" value="P:mRNA processing"/>
    <property type="evidence" value="ECO:0007669"/>
    <property type="project" value="UniProtKB-KW"/>
</dbReference>
<dbReference type="CDD" id="cd20919">
    <property type="entry name" value="polyA_pol_Pox"/>
    <property type="match status" value="1"/>
</dbReference>
<dbReference type="Gene3D" id="1.20.1270.320">
    <property type="entry name" value="Poxvirus poly(A) polymerase, N domain"/>
    <property type="match status" value="1"/>
</dbReference>
<dbReference type="Gene3D" id="3.30.460.60">
    <property type="entry name" value="Poxvirus poly(A) polymerase, nucleotidyltransferase domain"/>
    <property type="match status" value="1"/>
</dbReference>
<dbReference type="InterPro" id="IPR004976">
    <property type="entry name" value="PolyA_pol_cat_Poxvir"/>
</dbReference>
<dbReference type="InterPro" id="IPR037265">
    <property type="entry name" value="PolyA_pol_cat_sf"/>
</dbReference>
<dbReference type="InterPro" id="IPR024231">
    <property type="entry name" value="PolyA_pol_nucTrfase_Poxvir"/>
</dbReference>
<dbReference type="InterPro" id="IPR038419">
    <property type="entry name" value="PolyA_pol_nucTrfase_sf_Poxvir"/>
</dbReference>
<dbReference type="InterPro" id="IPR024397">
    <property type="entry name" value="Poxvirus_polyA_pol_cat_C"/>
</dbReference>
<dbReference type="InterPro" id="IPR024398">
    <property type="entry name" value="Poxvirus_polyA_pol_cat_N"/>
</dbReference>
<dbReference type="InterPro" id="IPR038337">
    <property type="entry name" value="Poxvirus_polyA_pol_cat_N_sf"/>
</dbReference>
<dbReference type="Pfam" id="PF03296">
    <property type="entry name" value="Pox_polyA_pol"/>
    <property type="match status" value="1"/>
</dbReference>
<dbReference type="Pfam" id="PF12629">
    <property type="entry name" value="Pox_polyA_pol_C"/>
    <property type="match status" value="1"/>
</dbReference>
<dbReference type="Pfam" id="PF12630">
    <property type="entry name" value="Pox_polyA_pol_N"/>
    <property type="match status" value="1"/>
</dbReference>
<dbReference type="PIRSF" id="PIRSF015693">
    <property type="entry name" value="VAC-48L_nuct"/>
    <property type="match status" value="1"/>
</dbReference>
<dbReference type="SUPFAM" id="SSF160957">
    <property type="entry name" value="Poly(A) polymerase catalytic subunit-like"/>
    <property type="match status" value="1"/>
</dbReference>
<comment type="function">
    <text>Polymerase that creates the 3'-poly(A) tail of mRNA's.</text>
</comment>
<comment type="catalytic activity">
    <reaction>
        <text>RNA(n) + ATP = RNA(n)-3'-adenine ribonucleotide + diphosphate</text>
        <dbReference type="Rhea" id="RHEA:11332"/>
        <dbReference type="Rhea" id="RHEA-COMP:14527"/>
        <dbReference type="Rhea" id="RHEA-COMP:17347"/>
        <dbReference type="ChEBI" id="CHEBI:30616"/>
        <dbReference type="ChEBI" id="CHEBI:33019"/>
        <dbReference type="ChEBI" id="CHEBI:140395"/>
        <dbReference type="ChEBI" id="CHEBI:173115"/>
        <dbReference type="EC" id="2.7.7.19"/>
    </reaction>
</comment>
<comment type="subunit">
    <text evidence="1">Heterodimer of a large (catalytic) subunit and a small (regulatory) subunit.</text>
</comment>
<comment type="similarity">
    <text evidence="2">Belongs to the poxviridae poly(A) polymerase catalytic subunit family.</text>
</comment>
<organism>
    <name type="scientific">Yaba-like disease virus</name>
    <name type="common">YLDV</name>
    <dbReference type="NCBI Taxonomy" id="132475"/>
    <lineage>
        <taxon>Viruses</taxon>
        <taxon>Varidnaviria</taxon>
        <taxon>Bamfordvirae</taxon>
        <taxon>Nucleocytoviricota</taxon>
        <taxon>Pokkesviricetes</taxon>
        <taxon>Chitovirales</taxon>
        <taxon>Poxviridae</taxon>
        <taxon>Chordopoxvirinae</taxon>
        <taxon>Yatapoxvirus</taxon>
        <taxon>Tanapox virus</taxon>
    </lineage>
</organism>
<sequence>MSNSITLTLKNYLGRMPTINEYHMLKSQVRNIQKIMFFNKDIFISLIKKNKKKFFSEIKSSPSEIKTHILEYFLKQQKTSSIGKLYTIIELQTILVSSYTDVLGVLTTKSPYVFPSNIKYEPHSMKKIAHDILTSINVATISEKVMGRHNVSNLVTNVNLLMEEYLRRHNKSCICYGSYSLYLLNPSIKYGDIDILQTNSRIFLINLAFLIKFITGHNVMLLKVPYLKNYMVLRDNEDKHIIDSFNVRQETMHAIPKILIDNIYIVDPTFQLLSMIKMFSQIDRLEDLAKNQEKATIKLATLLEYVRIKHGIILNGNVTNMPMPASFNYEKRIVTVDASKYNFSFKKCFVYLDENSLSSDILDLNADDAIDFENVSNSVFLINDEVMYTYFSNTILMSSKNEIHEISARGVSAHILMYQILTDGDFLIPLSDIINSLMFKEKTPIFNIIPRDKKTGKHGIINIEKDIITH</sequence>
<protein>
    <recommendedName>
        <fullName>Poly(A) polymerase catalytic subunit</fullName>
        <ecNumber>2.7.7.19</ecNumber>
    </recommendedName>
    <alternativeName>
        <fullName>Poly(A) polymerase large subunit</fullName>
        <shortName>PAP-L</shortName>
    </alternativeName>
</protein>
<proteinExistence type="inferred from homology"/>
<accession>Q9DHT0</accession>